<evidence type="ECO:0000250" key="1"/>
<evidence type="ECO:0000255" key="2">
    <source>
        <dbReference type="PROSITE-ProRule" id="PRU01136"/>
    </source>
</evidence>
<evidence type="ECO:0000255" key="3">
    <source>
        <dbReference type="PROSITE-ProRule" id="PRU01137"/>
    </source>
</evidence>
<evidence type="ECO:0000255" key="4">
    <source>
        <dbReference type="PROSITE-ProRule" id="PRU01138"/>
    </source>
</evidence>
<evidence type="ECO:0000256" key="5">
    <source>
        <dbReference type="SAM" id="MobiDB-lite"/>
    </source>
</evidence>
<evidence type="ECO:0000269" key="6">
    <source>
    </source>
</evidence>
<evidence type="ECO:0000305" key="7"/>
<comment type="catalytic activity">
    <reaction>
        <text>propanoyl-CoA + hydrogencarbonate + ATP = (S)-methylmalonyl-CoA + ADP + phosphate + H(+)</text>
        <dbReference type="Rhea" id="RHEA:23720"/>
        <dbReference type="ChEBI" id="CHEBI:15378"/>
        <dbReference type="ChEBI" id="CHEBI:17544"/>
        <dbReference type="ChEBI" id="CHEBI:30616"/>
        <dbReference type="ChEBI" id="CHEBI:43474"/>
        <dbReference type="ChEBI" id="CHEBI:57327"/>
        <dbReference type="ChEBI" id="CHEBI:57392"/>
        <dbReference type="ChEBI" id="CHEBI:456216"/>
        <dbReference type="EC" id="6.4.1.3"/>
    </reaction>
</comment>
<comment type="pathway">
    <text>Metabolic intermediate metabolism; propanoyl-CoA degradation; succinyl-CoA from propanoyl-CoA: step 1/3.</text>
</comment>
<comment type="subunit">
    <text evidence="1">Probably a dodecamer composed of six biotin-containing alpha subunits and six beta subunits.</text>
</comment>
<comment type="disruption phenotype">
    <text evidence="6">Mutant lacks PCCase activity. Mutation has no effect on erythromycin production.</text>
</comment>
<comment type="similarity">
    <text evidence="7">Belongs to the AccD/PCCB family.</text>
</comment>
<accession>P53003</accession>
<accession>A4FF48</accession>
<feature type="chain" id="PRO_0000199803" description="Propionyl-CoA carboxylase beta chain">
    <location>
        <begin position="1"/>
        <end position="546"/>
    </location>
</feature>
<feature type="domain" description="CoA carboxyltransferase N-terminal" evidence="2">
    <location>
        <begin position="21"/>
        <end position="277"/>
    </location>
</feature>
<feature type="domain" description="CoA carboxyltransferase C-terminal" evidence="3">
    <location>
        <begin position="292"/>
        <end position="540"/>
    </location>
</feature>
<feature type="region of interest" description="Disordered" evidence="5">
    <location>
        <begin position="1"/>
        <end position="20"/>
    </location>
</feature>
<feature type="region of interest" description="Carboxyltransferase" evidence="4">
    <location>
        <begin position="21"/>
        <end position="540"/>
    </location>
</feature>
<feature type="sequence conflict" description="In Ref. 1; CAA63310." evidence="7" ref="1">
    <original>E</original>
    <variation>D</variation>
    <location>
        <position position="399"/>
    </location>
</feature>
<feature type="sequence conflict" description="In Ref. 1; CAA63310." evidence="7" ref="1">
    <original>G</original>
    <variation>A</variation>
    <location>
        <position position="402"/>
    </location>
</feature>
<keyword id="KW-0067">ATP-binding</keyword>
<keyword id="KW-0436">Ligase</keyword>
<keyword id="KW-0547">Nucleotide-binding</keyword>
<keyword id="KW-1185">Reference proteome</keyword>
<reference key="1">
    <citation type="journal article" date="1996" name="Mol. Microbiol.">
        <title>Erythromycin production in Saccharopolyspora erythraea does not require a functional propionyl-CoA carboxylase.</title>
        <authorList>
            <person name="Donadio S."/>
            <person name="Staver M.J."/>
            <person name="Katz L."/>
        </authorList>
    </citation>
    <scope>NUCLEOTIDE SEQUENCE [GENOMIC DNA]</scope>
    <scope>DISRUPTION PHENOTYPE</scope>
    <source>
        <strain>ATCC 11635 / DSM 40517 / JCM 4748 / NBRC 13426 / NCIMB 8594 / NRRL 2338</strain>
    </source>
</reference>
<reference key="2">
    <citation type="journal article" date="2007" name="Nat. Biotechnol.">
        <title>Complete genome sequence of the erythromycin-producing bacterium Saccharopolyspora erythraea NRRL23338.</title>
        <authorList>
            <person name="Oliynyk M."/>
            <person name="Samborskyy M."/>
            <person name="Lester J.B."/>
            <person name="Mironenko T."/>
            <person name="Scott N."/>
            <person name="Dickens S."/>
            <person name="Haydock S.F."/>
            <person name="Leadlay P.F."/>
        </authorList>
    </citation>
    <scope>NUCLEOTIDE SEQUENCE [LARGE SCALE GENOMIC DNA]</scope>
    <source>
        <strain>ATCC 11635 / DSM 40517 / JCM 4748 / NBRC 13426 / NCIMB 8594 / NRRL 2338</strain>
    </source>
</reference>
<proteinExistence type="inferred from homology"/>
<protein>
    <recommendedName>
        <fullName>Propionyl-CoA carboxylase beta chain</fullName>
        <shortName>PCCase</shortName>
        <ecNumber>6.4.1.3</ecNumber>
    </recommendedName>
    <alternativeName>
        <fullName>Propanoyl-CoA:carbon dioxide ligase</fullName>
    </alternativeName>
</protein>
<dbReference type="EC" id="6.4.1.3"/>
<dbReference type="EMBL" id="X92557">
    <property type="protein sequence ID" value="CAA63310.1"/>
    <property type="molecule type" value="Genomic_DNA"/>
</dbReference>
<dbReference type="EMBL" id="AM420293">
    <property type="protein sequence ID" value="CAM02673.1"/>
    <property type="molecule type" value="Genomic_DNA"/>
</dbReference>
<dbReference type="PIR" id="S71008">
    <property type="entry name" value="S71008"/>
</dbReference>
<dbReference type="RefSeq" id="WP_009949581.1">
    <property type="nucleotide sequence ID" value="NC_009142.1"/>
</dbReference>
<dbReference type="SMR" id="P53003"/>
<dbReference type="STRING" id="405948.SACE_3398"/>
<dbReference type="KEGG" id="sen:SACE_3398"/>
<dbReference type="eggNOG" id="COG4799">
    <property type="taxonomic scope" value="Bacteria"/>
</dbReference>
<dbReference type="HOGENOM" id="CLU_018822_6_2_11"/>
<dbReference type="OrthoDB" id="9803706at2"/>
<dbReference type="UniPathway" id="UPA00945">
    <property type="reaction ID" value="UER00908"/>
</dbReference>
<dbReference type="Proteomes" id="UP000006728">
    <property type="component" value="Chromosome"/>
</dbReference>
<dbReference type="GO" id="GO:0009317">
    <property type="term" value="C:acetyl-CoA carboxylase complex"/>
    <property type="evidence" value="ECO:0007669"/>
    <property type="project" value="InterPro"/>
</dbReference>
<dbReference type="GO" id="GO:0003989">
    <property type="term" value="F:acetyl-CoA carboxylase activity"/>
    <property type="evidence" value="ECO:0007669"/>
    <property type="project" value="InterPro"/>
</dbReference>
<dbReference type="GO" id="GO:0005524">
    <property type="term" value="F:ATP binding"/>
    <property type="evidence" value="ECO:0007669"/>
    <property type="project" value="UniProtKB-KW"/>
</dbReference>
<dbReference type="GO" id="GO:0004658">
    <property type="term" value="F:propionyl-CoA carboxylase activity"/>
    <property type="evidence" value="ECO:0007669"/>
    <property type="project" value="UniProtKB-EC"/>
</dbReference>
<dbReference type="GO" id="GO:0006633">
    <property type="term" value="P:fatty acid biosynthetic process"/>
    <property type="evidence" value="ECO:0007669"/>
    <property type="project" value="InterPro"/>
</dbReference>
<dbReference type="FunFam" id="3.90.226.10:FF:000017">
    <property type="entry name" value="Propionyl-CoA carboxylase subunit beta 5"/>
    <property type="match status" value="1"/>
</dbReference>
<dbReference type="FunFam" id="3.90.226.10:FF:000016">
    <property type="entry name" value="Propionyl-CoA carboxylase, beta subunit"/>
    <property type="match status" value="1"/>
</dbReference>
<dbReference type="Gene3D" id="3.90.226.10">
    <property type="entry name" value="2-enoyl-CoA Hydratase, Chain A, domain 1"/>
    <property type="match status" value="2"/>
</dbReference>
<dbReference type="InterPro" id="IPR051047">
    <property type="entry name" value="AccD/PCCB"/>
</dbReference>
<dbReference type="InterPro" id="IPR034733">
    <property type="entry name" value="AcCoA_carboxyl_beta"/>
</dbReference>
<dbReference type="InterPro" id="IPR000438">
    <property type="entry name" value="Acetyl_CoA_COase_Trfase_b_su"/>
</dbReference>
<dbReference type="InterPro" id="IPR029045">
    <property type="entry name" value="ClpP/crotonase-like_dom_sf"/>
</dbReference>
<dbReference type="InterPro" id="IPR011763">
    <property type="entry name" value="COA_CT_C"/>
</dbReference>
<dbReference type="InterPro" id="IPR011762">
    <property type="entry name" value="COA_CT_N"/>
</dbReference>
<dbReference type="PANTHER" id="PTHR43842">
    <property type="entry name" value="PROPIONYL-COA CARBOXYLASE BETA CHAIN"/>
    <property type="match status" value="1"/>
</dbReference>
<dbReference type="PANTHER" id="PTHR43842:SF2">
    <property type="entry name" value="PROPIONYL-COA CARBOXYLASE BETA CHAIN, MITOCHONDRIAL"/>
    <property type="match status" value="1"/>
</dbReference>
<dbReference type="Pfam" id="PF01039">
    <property type="entry name" value="Carboxyl_trans"/>
    <property type="match status" value="1"/>
</dbReference>
<dbReference type="PRINTS" id="PR01070">
    <property type="entry name" value="ACCCTRFRASEB"/>
</dbReference>
<dbReference type="SUPFAM" id="SSF52096">
    <property type="entry name" value="ClpP/crotonase"/>
    <property type="match status" value="2"/>
</dbReference>
<dbReference type="PROSITE" id="PS50989">
    <property type="entry name" value="COA_CT_CTER"/>
    <property type="match status" value="1"/>
</dbReference>
<dbReference type="PROSITE" id="PS50980">
    <property type="entry name" value="COA_CT_NTER"/>
    <property type="match status" value="1"/>
</dbReference>
<organism>
    <name type="scientific">Saccharopolyspora erythraea (strain ATCC 11635 / DSM 40517 / JCM 4748 / NBRC 13426 / NCIMB 8594 / NRRL 2338)</name>
    <dbReference type="NCBI Taxonomy" id="405948"/>
    <lineage>
        <taxon>Bacteria</taxon>
        <taxon>Bacillati</taxon>
        <taxon>Actinomycetota</taxon>
        <taxon>Actinomycetes</taxon>
        <taxon>Pseudonocardiales</taxon>
        <taxon>Pseudonocardiaceae</taxon>
        <taxon>Saccharopolyspora</taxon>
    </lineage>
</organism>
<gene>
    <name type="primary">pccB</name>
    <name type="ordered locus">SACE_3398</name>
</gene>
<name>PCCB_SACEN</name>
<sequence>MSSATEPVGVPPAEAPDIHTTAGKLADLYRRNHEAVHAGSERAVAKQHAKGKRTARERIDMLLDEGSFVELDEHARHRSTNFGMDADRPYGDGVVTGWGTVDGRRVCVFSQDFTVFGGSLGEVFGEKIVKVMDLAMKTGCPLVGINDSGGARIQEGVAALGLYAEIFKRNTHASGVIPQISLIMGPCAGGAVYSPAITDFTVMVDQTSHMFITGPDVIKTVTGEDVSFEDLGGARTHNERSGNAHYLATDEDDAISYVKELLSFLPSNNLSSSPVFPGAEVEEGSVADGVGDADLELDALVPDSPNQPYDMREVITRLVDEGEFLEVSALFAPNMLCGFGRIEGASVGVVANQPMQLAGTLDIDASEKAARFVRFCDAFNIPVLTLVDVPGFLPGTGQEWNGIIRRGAKLLYAYAEATVPLVTVITRKAYGGAYDVMGSKHLGADINLAWPTAQIAVMGAQGAANILYRRQLAEAAERGEDVEALRARLQQEYEDTLCNPYVAAERGYVDSVIPPSHTRGHVARALRMLADKREALPAKKHGNIPL</sequence>